<reference key="1">
    <citation type="journal article" date="1997" name="Nature">
        <title>The nucleotide sequence of Saccharomyces cerevisiae chromosome V.</title>
        <authorList>
            <person name="Dietrich F.S."/>
            <person name="Mulligan J.T."/>
            <person name="Hennessy K.M."/>
            <person name="Yelton M.A."/>
            <person name="Allen E."/>
            <person name="Araujo R."/>
            <person name="Aviles E."/>
            <person name="Berno A."/>
            <person name="Brennan T."/>
            <person name="Carpenter J."/>
            <person name="Chen E."/>
            <person name="Cherry J.M."/>
            <person name="Chung E."/>
            <person name="Duncan M."/>
            <person name="Guzman E."/>
            <person name="Hartzell G."/>
            <person name="Hunicke-Smith S."/>
            <person name="Hyman R.W."/>
            <person name="Kayser A."/>
            <person name="Komp C."/>
            <person name="Lashkari D."/>
            <person name="Lew H."/>
            <person name="Lin D."/>
            <person name="Mosedale D."/>
            <person name="Nakahara K."/>
            <person name="Namath A."/>
            <person name="Norgren R."/>
            <person name="Oefner P."/>
            <person name="Oh C."/>
            <person name="Petel F.X."/>
            <person name="Roberts D."/>
            <person name="Sehl P."/>
            <person name="Schramm S."/>
            <person name="Shogren T."/>
            <person name="Smith V."/>
            <person name="Taylor P."/>
            <person name="Wei Y."/>
            <person name="Botstein D."/>
            <person name="Davis R.W."/>
        </authorList>
    </citation>
    <scope>NUCLEOTIDE SEQUENCE [LARGE SCALE GENOMIC DNA]</scope>
    <source>
        <strain>ATCC 204508 / S288c</strain>
    </source>
</reference>
<reference key="2">
    <citation type="journal article" date="2014" name="G3 (Bethesda)">
        <title>The reference genome sequence of Saccharomyces cerevisiae: Then and now.</title>
        <authorList>
            <person name="Engel S.R."/>
            <person name="Dietrich F.S."/>
            <person name="Fisk D.G."/>
            <person name="Binkley G."/>
            <person name="Balakrishnan R."/>
            <person name="Costanzo M.C."/>
            <person name="Dwight S.S."/>
            <person name="Hitz B.C."/>
            <person name="Karra K."/>
            <person name="Nash R.S."/>
            <person name="Weng S."/>
            <person name="Wong E.D."/>
            <person name="Lloyd P."/>
            <person name="Skrzypek M.S."/>
            <person name="Miyasato S.R."/>
            <person name="Simison M."/>
            <person name="Cherry J.M."/>
        </authorList>
    </citation>
    <scope>GENOME REANNOTATION</scope>
    <source>
        <strain>ATCC 204508 / S288c</strain>
    </source>
</reference>
<reference key="3">
    <citation type="journal article" date="2007" name="Genome Res.">
        <title>Approaching a complete repository of sequence-verified protein-encoding clones for Saccharomyces cerevisiae.</title>
        <authorList>
            <person name="Hu Y."/>
            <person name="Rolfs A."/>
            <person name="Bhullar B."/>
            <person name="Murthy T.V.S."/>
            <person name="Zhu C."/>
            <person name="Berger M.F."/>
            <person name="Camargo A.A."/>
            <person name="Kelley F."/>
            <person name="McCarron S."/>
            <person name="Jepson D."/>
            <person name="Richardson A."/>
            <person name="Raphael J."/>
            <person name="Moreira D."/>
            <person name="Taycher E."/>
            <person name="Zuo D."/>
            <person name="Mohr S."/>
            <person name="Kane M.F."/>
            <person name="Williamson J."/>
            <person name="Simpson A.J.G."/>
            <person name="Bulyk M.L."/>
            <person name="Harlow E."/>
            <person name="Marsischky G."/>
            <person name="Kolodner R.D."/>
            <person name="LaBaer J."/>
        </authorList>
    </citation>
    <scope>NUCLEOTIDE SEQUENCE [GENOMIC DNA]</scope>
    <source>
        <strain>ATCC 204508 / S288c</strain>
    </source>
</reference>
<name>YEC8_YEAST</name>
<protein>
    <recommendedName>
        <fullName>Uncharacterized protein YEL028W</fullName>
    </recommendedName>
</protein>
<evidence type="ECO:0000255" key="1"/>
<dbReference type="EMBL" id="U18530">
    <property type="protein sequence ID" value="AAB64505.1"/>
    <property type="molecule type" value="Genomic_DNA"/>
</dbReference>
<dbReference type="EMBL" id="AY557802">
    <property type="protein sequence ID" value="AAS56128.1"/>
    <property type="molecule type" value="Genomic_DNA"/>
</dbReference>
<dbReference type="EMBL" id="BK006939">
    <property type="protein sequence ID" value="DAA80284.1"/>
    <property type="molecule type" value="Genomic_DNA"/>
</dbReference>
<dbReference type="PIR" id="S50431">
    <property type="entry name" value="S50431"/>
</dbReference>
<dbReference type="RefSeq" id="NP_001335764.1">
    <property type="nucleotide sequence ID" value="NM_001348820.1"/>
</dbReference>
<dbReference type="FunCoup" id="P39989">
    <property type="interactions" value="14"/>
</dbReference>
<dbReference type="IntAct" id="P39989">
    <property type="interactions" value="1"/>
</dbReference>
<dbReference type="PaxDb" id="4932-YEL028W"/>
<dbReference type="EnsemblFungi" id="YEL028W_mRNA">
    <property type="protein sequence ID" value="YEL028W"/>
    <property type="gene ID" value="YEL028W"/>
</dbReference>
<dbReference type="GeneID" id="856684"/>
<dbReference type="AGR" id="SGD:S000000754"/>
<dbReference type="SGD" id="S000000754">
    <property type="gene designation" value="YEL028W"/>
</dbReference>
<dbReference type="eggNOG" id="ENOG502SSU1">
    <property type="taxonomic scope" value="Eukaryota"/>
</dbReference>
<dbReference type="HOGENOM" id="CLU_1769190_0_0_1"/>
<dbReference type="InParanoid" id="P39989"/>
<dbReference type="OMA" id="HMKEIAN"/>
<dbReference type="OrthoDB" id="4070802at2759"/>
<dbReference type="PRO" id="PR:P39989"/>
<dbReference type="Proteomes" id="UP000002311">
    <property type="component" value="Chromosome V"/>
</dbReference>
<dbReference type="RNAct" id="P39989">
    <property type="molecule type" value="protein"/>
</dbReference>
<sequence length="153" mass="17360">MKITITSLLFFLVMIVELASAGTLLHNGANLPSLRDNTTLTDARNVLKYLQVLGFPSNKIAATDTVGTFIIFSNRTEANTTAMTKTVSYCYRNYGHSFYFTHYKYDYFPSGISYMAKLGDATVNHTDLPHFRNNKRLTTQELNAFQHPIVEFQ</sequence>
<organism>
    <name type="scientific">Saccharomyces cerevisiae (strain ATCC 204508 / S288c)</name>
    <name type="common">Baker's yeast</name>
    <dbReference type="NCBI Taxonomy" id="559292"/>
    <lineage>
        <taxon>Eukaryota</taxon>
        <taxon>Fungi</taxon>
        <taxon>Dikarya</taxon>
        <taxon>Ascomycota</taxon>
        <taxon>Saccharomycotina</taxon>
        <taxon>Saccharomycetes</taxon>
        <taxon>Saccharomycetales</taxon>
        <taxon>Saccharomycetaceae</taxon>
        <taxon>Saccharomyces</taxon>
    </lineage>
</organism>
<gene>
    <name type="ordered locus">YEL028W</name>
</gene>
<feature type="signal peptide" evidence="1">
    <location>
        <begin position="1"/>
        <end position="21"/>
    </location>
</feature>
<feature type="chain" id="PRO_0000014314" description="Uncharacterized protein YEL028W">
    <location>
        <begin position="22"/>
        <end position="153"/>
    </location>
</feature>
<keyword id="KW-1185">Reference proteome</keyword>
<keyword id="KW-0732">Signal</keyword>
<proteinExistence type="inferred from homology"/>
<accession>P39989</accession>
<accession>A0A1S0T060</accession>